<accession>Q4L2Y9</accession>
<dbReference type="EC" id="2.5.1.-" evidence="1"/>
<dbReference type="EMBL" id="AP006717">
    <property type="protein sequence ID" value="BAE05988.1"/>
    <property type="molecule type" value="Genomic_DNA"/>
</dbReference>
<dbReference type="RefSeq" id="WP_011276918.1">
    <property type="nucleotide sequence ID" value="NC_007169.1"/>
</dbReference>
<dbReference type="SMR" id="Q4L2Y9"/>
<dbReference type="CARD" id="ARO:3004670">
    <property type="molecule name" value="FosB1"/>
    <property type="mechanism identifier" value="ARO:0001004"/>
    <property type="mechanism name" value="antibiotic inactivation"/>
</dbReference>
<dbReference type="KEGG" id="sha:pSHaeA01"/>
<dbReference type="eggNOG" id="COG0346">
    <property type="taxonomic scope" value="Bacteria"/>
</dbReference>
<dbReference type="HOGENOM" id="CLU_121356_0_0_9"/>
<dbReference type="OrthoDB" id="192739at2"/>
<dbReference type="Proteomes" id="UP000000543">
    <property type="component" value="Plasmid pSHaeA"/>
</dbReference>
<dbReference type="GO" id="GO:0005737">
    <property type="term" value="C:cytoplasm"/>
    <property type="evidence" value="ECO:0007669"/>
    <property type="project" value="UniProtKB-SubCell"/>
</dbReference>
<dbReference type="GO" id="GO:0000287">
    <property type="term" value="F:magnesium ion binding"/>
    <property type="evidence" value="ECO:0007669"/>
    <property type="project" value="UniProtKB-UniRule"/>
</dbReference>
<dbReference type="GO" id="GO:0016765">
    <property type="term" value="F:transferase activity, transferring alkyl or aryl (other than methyl) groups"/>
    <property type="evidence" value="ECO:0007669"/>
    <property type="project" value="UniProtKB-UniRule"/>
</dbReference>
<dbReference type="GO" id="GO:0046677">
    <property type="term" value="P:response to antibiotic"/>
    <property type="evidence" value="ECO:0007669"/>
    <property type="project" value="UniProtKB-UniRule"/>
</dbReference>
<dbReference type="Gene3D" id="3.10.180.10">
    <property type="entry name" value="2,3-Dihydroxybiphenyl 1,2-Dioxygenase, domain 1"/>
    <property type="match status" value="1"/>
</dbReference>
<dbReference type="HAMAP" id="MF_01512">
    <property type="entry name" value="FosB"/>
    <property type="match status" value="1"/>
</dbReference>
<dbReference type="InterPro" id="IPR051332">
    <property type="entry name" value="Fosfomycin_Res_Enzymes"/>
</dbReference>
<dbReference type="InterPro" id="IPR029068">
    <property type="entry name" value="Glyas_Bleomycin-R_OHBP_Dase"/>
</dbReference>
<dbReference type="InterPro" id="IPR004360">
    <property type="entry name" value="Glyas_Fos-R_dOase_dom"/>
</dbReference>
<dbReference type="InterPro" id="IPR022858">
    <property type="entry name" value="Metallothiol_Trafse_FosB"/>
</dbReference>
<dbReference type="InterPro" id="IPR037523">
    <property type="entry name" value="VOC"/>
</dbReference>
<dbReference type="NCBIfam" id="NF000493">
    <property type="entry name" value="Fos_BSH"/>
    <property type="match status" value="1"/>
</dbReference>
<dbReference type="NCBIfam" id="NF000085">
    <property type="entry name" value="Fos_BSH_Saur"/>
    <property type="match status" value="1"/>
</dbReference>
<dbReference type="NCBIfam" id="NF003152">
    <property type="entry name" value="PRK04101.1"/>
    <property type="match status" value="1"/>
</dbReference>
<dbReference type="PANTHER" id="PTHR36113:SF6">
    <property type="entry name" value="FOSFOMYCIN RESISTANCE PROTEIN FOSX"/>
    <property type="match status" value="1"/>
</dbReference>
<dbReference type="PANTHER" id="PTHR36113">
    <property type="entry name" value="LYASE, PUTATIVE-RELATED-RELATED"/>
    <property type="match status" value="1"/>
</dbReference>
<dbReference type="Pfam" id="PF00903">
    <property type="entry name" value="Glyoxalase"/>
    <property type="match status" value="1"/>
</dbReference>
<dbReference type="SUPFAM" id="SSF54593">
    <property type="entry name" value="Glyoxalase/Bleomycin resistance protein/Dihydroxybiphenyl dioxygenase"/>
    <property type="match status" value="1"/>
</dbReference>
<dbReference type="PROSITE" id="PS51819">
    <property type="entry name" value="VOC"/>
    <property type="match status" value="1"/>
</dbReference>
<organism>
    <name type="scientific">Staphylococcus haemolyticus (strain JCSC1435)</name>
    <dbReference type="NCBI Taxonomy" id="279808"/>
    <lineage>
        <taxon>Bacteria</taxon>
        <taxon>Bacillati</taxon>
        <taxon>Bacillota</taxon>
        <taxon>Bacilli</taxon>
        <taxon>Bacillales</taxon>
        <taxon>Staphylococcaceae</taxon>
        <taxon>Staphylococcus</taxon>
    </lineage>
</organism>
<feature type="chain" id="PRO_0000243764" description="Metallothiol transferase FosB">
    <location>
        <begin position="1"/>
        <end position="139"/>
    </location>
</feature>
<feature type="domain" description="VOC" evidence="2">
    <location>
        <begin position="4"/>
        <end position="119"/>
    </location>
</feature>
<feature type="active site" description="Proton donor/acceptor" evidence="2">
    <location>
        <position position="115"/>
    </location>
</feature>
<feature type="binding site" evidence="1">
    <location>
        <position position="7"/>
    </location>
    <ligand>
        <name>Mg(2+)</name>
        <dbReference type="ChEBI" id="CHEBI:18420"/>
    </ligand>
</feature>
<feature type="binding site" evidence="1">
    <location>
        <position position="66"/>
    </location>
    <ligand>
        <name>Mg(2+)</name>
        <dbReference type="ChEBI" id="CHEBI:18420"/>
    </ligand>
</feature>
<feature type="binding site" evidence="1">
    <location>
        <position position="115"/>
    </location>
    <ligand>
        <name>Mg(2+)</name>
        <dbReference type="ChEBI" id="CHEBI:18420"/>
    </ligand>
</feature>
<proteinExistence type="inferred from homology"/>
<evidence type="ECO:0000255" key="1">
    <source>
        <dbReference type="HAMAP-Rule" id="MF_01512"/>
    </source>
</evidence>
<evidence type="ECO:0000255" key="2">
    <source>
        <dbReference type="PROSITE-ProRule" id="PRU01163"/>
    </source>
</evidence>
<comment type="function">
    <text evidence="1">Metallothiol transferase which confers resistance to fosfomycin by catalyzing the addition of a thiol cofactor to fosfomycin. L-cysteine is probably the physiological thiol donor.</text>
</comment>
<comment type="cofactor">
    <cofactor evidence="1">
        <name>Mg(2+)</name>
        <dbReference type="ChEBI" id="CHEBI:18420"/>
    </cofactor>
</comment>
<comment type="subunit">
    <text evidence="1">Homodimer.</text>
</comment>
<comment type="subcellular location">
    <subcellularLocation>
        <location evidence="1">Cytoplasm</location>
    </subcellularLocation>
</comment>
<comment type="similarity">
    <text evidence="1">Belongs to the fosfomycin resistance protein family. FosB subfamily.</text>
</comment>
<keyword id="KW-0046">Antibiotic resistance</keyword>
<keyword id="KW-0963">Cytoplasm</keyword>
<keyword id="KW-0460">Magnesium</keyword>
<keyword id="KW-0479">Metal-binding</keyword>
<keyword id="KW-0614">Plasmid</keyword>
<keyword id="KW-0808">Transferase</keyword>
<name>FOSB_STAHJ</name>
<sequence>MIKGINHITYSVSNIAKSIEFYRDILGADILVESETSAYFNLGGIWLALNEEKNIPRSEIKYSYTHIAFTISDNDFEDWYNWLKENEVNILEGRDRDIRDKKSIYFTDLDGHKLELHTGSLEDRLSYYKEAKPHMNFYI</sequence>
<reference key="1">
    <citation type="journal article" date="2005" name="J. Bacteriol.">
        <title>Whole-genome sequencing of Staphylococcus haemolyticus uncovers the extreme plasticity of its genome and the evolution of human-colonizing staphylococcal species.</title>
        <authorList>
            <person name="Takeuchi F."/>
            <person name="Watanabe S."/>
            <person name="Baba T."/>
            <person name="Yuzawa H."/>
            <person name="Ito T."/>
            <person name="Morimoto Y."/>
            <person name="Kuroda M."/>
            <person name="Cui L."/>
            <person name="Takahashi M."/>
            <person name="Ankai A."/>
            <person name="Baba S."/>
            <person name="Fukui S."/>
            <person name="Lee J.C."/>
            <person name="Hiramatsu K."/>
        </authorList>
    </citation>
    <scope>NUCLEOTIDE SEQUENCE [LARGE SCALE GENOMIC DNA]</scope>
    <source>
        <strain>JCSC1435</strain>
    </source>
</reference>
<protein>
    <recommendedName>
        <fullName evidence="1">Metallothiol transferase FosB</fullName>
        <ecNumber evidence="1">2.5.1.-</ecNumber>
    </recommendedName>
    <alternativeName>
        <fullName evidence="1">Fosfomycin resistance protein</fullName>
    </alternativeName>
</protein>
<gene>
    <name evidence="1" type="primary">fosB</name>
    <name type="ordered locus">pSHaeA01</name>
</gene>
<geneLocation type="plasmid">
    <name>pSHaeA</name>
</geneLocation>